<proteinExistence type="inferred from homology"/>
<protein>
    <recommendedName>
        <fullName evidence="1">Ribosomal RNA small subunit methyltransferase H</fullName>
        <ecNumber evidence="1">2.1.1.199</ecNumber>
    </recommendedName>
    <alternativeName>
        <fullName evidence="1">16S rRNA m(4)C1402 methyltransferase</fullName>
    </alternativeName>
    <alternativeName>
        <fullName evidence="1">rRNA (cytosine-N(4)-)-methyltransferase RsmH</fullName>
    </alternativeName>
</protein>
<accession>Q2FHQ8</accession>
<comment type="function">
    <text evidence="1">Specifically methylates the N4 position of cytidine in position 1402 (C1402) of 16S rRNA.</text>
</comment>
<comment type="catalytic activity">
    <reaction evidence="1">
        <text>cytidine(1402) in 16S rRNA + S-adenosyl-L-methionine = N(4)-methylcytidine(1402) in 16S rRNA + S-adenosyl-L-homocysteine + H(+)</text>
        <dbReference type="Rhea" id="RHEA:42928"/>
        <dbReference type="Rhea" id="RHEA-COMP:10286"/>
        <dbReference type="Rhea" id="RHEA-COMP:10287"/>
        <dbReference type="ChEBI" id="CHEBI:15378"/>
        <dbReference type="ChEBI" id="CHEBI:57856"/>
        <dbReference type="ChEBI" id="CHEBI:59789"/>
        <dbReference type="ChEBI" id="CHEBI:74506"/>
        <dbReference type="ChEBI" id="CHEBI:82748"/>
        <dbReference type="EC" id="2.1.1.199"/>
    </reaction>
</comment>
<comment type="subcellular location">
    <subcellularLocation>
        <location evidence="1">Cytoplasm</location>
    </subcellularLocation>
</comment>
<comment type="similarity">
    <text evidence="1">Belongs to the methyltransferase superfamily. RsmH family.</text>
</comment>
<comment type="sequence caution" evidence="2">
    <conflict type="erroneous initiation">
        <sequence resource="EMBL-CDS" id="ABD22251"/>
    </conflict>
</comment>
<keyword id="KW-0963">Cytoplasm</keyword>
<keyword id="KW-0489">Methyltransferase</keyword>
<keyword id="KW-0698">rRNA processing</keyword>
<keyword id="KW-0949">S-adenosyl-L-methionine</keyword>
<keyword id="KW-0808">Transferase</keyword>
<evidence type="ECO:0000255" key="1">
    <source>
        <dbReference type="HAMAP-Rule" id="MF_01007"/>
    </source>
</evidence>
<evidence type="ECO:0000305" key="2"/>
<feature type="chain" id="PRO_0000387140" description="Ribosomal RNA small subunit methyltransferase H">
    <location>
        <begin position="1"/>
        <end position="311"/>
    </location>
</feature>
<feature type="binding site" evidence="1">
    <location>
        <begin position="32"/>
        <end position="34"/>
    </location>
    <ligand>
        <name>S-adenosyl-L-methionine</name>
        <dbReference type="ChEBI" id="CHEBI:59789"/>
    </ligand>
</feature>
<feature type="binding site" evidence="1">
    <location>
        <position position="52"/>
    </location>
    <ligand>
        <name>S-adenosyl-L-methionine</name>
        <dbReference type="ChEBI" id="CHEBI:59789"/>
    </ligand>
</feature>
<feature type="binding site" evidence="1">
    <location>
        <position position="79"/>
    </location>
    <ligand>
        <name>S-adenosyl-L-methionine</name>
        <dbReference type="ChEBI" id="CHEBI:59789"/>
    </ligand>
</feature>
<feature type="binding site" evidence="1">
    <location>
        <position position="100"/>
    </location>
    <ligand>
        <name>S-adenosyl-L-methionine</name>
        <dbReference type="ChEBI" id="CHEBI:59789"/>
    </ligand>
</feature>
<feature type="binding site" evidence="1">
    <location>
        <position position="107"/>
    </location>
    <ligand>
        <name>S-adenosyl-L-methionine</name>
        <dbReference type="ChEBI" id="CHEBI:59789"/>
    </ligand>
</feature>
<dbReference type="EC" id="2.1.1.199" evidence="1"/>
<dbReference type="EMBL" id="CP000255">
    <property type="protein sequence ID" value="ABD22251.1"/>
    <property type="status" value="ALT_INIT"/>
    <property type="molecule type" value="Genomic_DNA"/>
</dbReference>
<dbReference type="RefSeq" id="WP_000468384.1">
    <property type="nucleotide sequence ID" value="NZ_CP027476.1"/>
</dbReference>
<dbReference type="SMR" id="Q2FHQ8"/>
<dbReference type="KEGG" id="saa:SAUSA300_1073"/>
<dbReference type="HOGENOM" id="CLU_038422_2_0_9"/>
<dbReference type="OMA" id="NPAKRTF"/>
<dbReference type="Proteomes" id="UP000001939">
    <property type="component" value="Chromosome"/>
</dbReference>
<dbReference type="GO" id="GO:0005737">
    <property type="term" value="C:cytoplasm"/>
    <property type="evidence" value="ECO:0007669"/>
    <property type="project" value="UniProtKB-SubCell"/>
</dbReference>
<dbReference type="GO" id="GO:0071424">
    <property type="term" value="F:rRNA (cytosine-N4-)-methyltransferase activity"/>
    <property type="evidence" value="ECO:0007669"/>
    <property type="project" value="UniProtKB-UniRule"/>
</dbReference>
<dbReference type="GO" id="GO:0070475">
    <property type="term" value="P:rRNA base methylation"/>
    <property type="evidence" value="ECO:0007669"/>
    <property type="project" value="UniProtKB-UniRule"/>
</dbReference>
<dbReference type="FunFam" id="1.10.150.170:FF:000001">
    <property type="entry name" value="Ribosomal RNA small subunit methyltransferase H"/>
    <property type="match status" value="1"/>
</dbReference>
<dbReference type="Gene3D" id="1.10.150.170">
    <property type="entry name" value="Putative methyltransferase TM0872, insert domain"/>
    <property type="match status" value="1"/>
</dbReference>
<dbReference type="Gene3D" id="3.40.50.150">
    <property type="entry name" value="Vaccinia Virus protein VP39"/>
    <property type="match status" value="1"/>
</dbReference>
<dbReference type="HAMAP" id="MF_01007">
    <property type="entry name" value="16SrRNA_methyltr_H"/>
    <property type="match status" value="1"/>
</dbReference>
<dbReference type="InterPro" id="IPR002903">
    <property type="entry name" value="RsmH"/>
</dbReference>
<dbReference type="InterPro" id="IPR023397">
    <property type="entry name" value="SAM-dep_MeTrfase_MraW_recog"/>
</dbReference>
<dbReference type="InterPro" id="IPR029063">
    <property type="entry name" value="SAM-dependent_MTases_sf"/>
</dbReference>
<dbReference type="NCBIfam" id="TIGR00006">
    <property type="entry name" value="16S rRNA (cytosine(1402)-N(4))-methyltransferase RsmH"/>
    <property type="match status" value="1"/>
</dbReference>
<dbReference type="PANTHER" id="PTHR11265:SF0">
    <property type="entry name" value="12S RRNA N4-METHYLCYTIDINE METHYLTRANSFERASE"/>
    <property type="match status" value="1"/>
</dbReference>
<dbReference type="PANTHER" id="PTHR11265">
    <property type="entry name" value="S-ADENOSYL-METHYLTRANSFERASE MRAW"/>
    <property type="match status" value="1"/>
</dbReference>
<dbReference type="Pfam" id="PF01795">
    <property type="entry name" value="Methyltransf_5"/>
    <property type="match status" value="1"/>
</dbReference>
<dbReference type="PIRSF" id="PIRSF004486">
    <property type="entry name" value="MraW"/>
    <property type="match status" value="1"/>
</dbReference>
<dbReference type="SUPFAM" id="SSF81799">
    <property type="entry name" value="Putative methyltransferase TM0872, insert domain"/>
    <property type="match status" value="1"/>
</dbReference>
<dbReference type="SUPFAM" id="SSF53335">
    <property type="entry name" value="S-adenosyl-L-methionine-dependent methyltransferases"/>
    <property type="match status" value="1"/>
</dbReference>
<sequence length="311" mass="35682">MFHHISVMLNETIDYLNVKENGVYIDCTLGGAGHALYLLNQLNDDGRLIAIDQDQTAIDNAKEVLKDHLHKVTFVHSNFRELTQILKDLNIEKVDGIYYDLGVSSPQLDIPERGFSYHHDATLDMRMDQTQELTAYEIVNNWSYEALVKIFYRYGEEKFSKQIARRIEAHREQQPITTTLELVDIIKEGIPAKARRKGGHPAKRVFQALRIAVNDELSAFEDSIEQAIELVKVDGRISVITFHSLEDRLCKQVFQEYEKGPEVPRGLPVIPEAYTPKLKRVNRKPITATEEDLDDNNRARSAKLRVAEILK</sequence>
<reference key="1">
    <citation type="journal article" date="2006" name="Lancet">
        <title>Complete genome sequence of USA300, an epidemic clone of community-acquired meticillin-resistant Staphylococcus aureus.</title>
        <authorList>
            <person name="Diep B.A."/>
            <person name="Gill S.R."/>
            <person name="Chang R.F."/>
            <person name="Phan T.H."/>
            <person name="Chen J.H."/>
            <person name="Davidson M.G."/>
            <person name="Lin F."/>
            <person name="Lin J."/>
            <person name="Carleton H.A."/>
            <person name="Mongodin E.F."/>
            <person name="Sensabaugh G.F."/>
            <person name="Perdreau-Remington F."/>
        </authorList>
    </citation>
    <scope>NUCLEOTIDE SEQUENCE [LARGE SCALE GENOMIC DNA]</scope>
    <source>
        <strain>USA300</strain>
    </source>
</reference>
<name>RSMH_STAA3</name>
<organism>
    <name type="scientific">Staphylococcus aureus (strain USA300)</name>
    <dbReference type="NCBI Taxonomy" id="367830"/>
    <lineage>
        <taxon>Bacteria</taxon>
        <taxon>Bacillati</taxon>
        <taxon>Bacillota</taxon>
        <taxon>Bacilli</taxon>
        <taxon>Bacillales</taxon>
        <taxon>Staphylococcaceae</taxon>
        <taxon>Staphylococcus</taxon>
    </lineage>
</organism>
<gene>
    <name evidence="1" type="primary">rsmH</name>
    <name type="synonym">mraW</name>
    <name type="ordered locus">SAUSA300_1073</name>
</gene>